<keyword id="KW-0067">ATP-binding</keyword>
<keyword id="KW-0997">Cell inner membrane</keyword>
<keyword id="KW-1003">Cell membrane</keyword>
<keyword id="KW-0963">Cytoplasm</keyword>
<keyword id="KW-0472">Membrane</keyword>
<keyword id="KW-0547">Nucleotide-binding</keyword>
<keyword id="KW-0653">Protein transport</keyword>
<keyword id="KW-1185">Reference proteome</keyword>
<keyword id="KW-1278">Translocase</keyword>
<keyword id="KW-0811">Translocation</keyword>
<keyword id="KW-0813">Transport</keyword>
<comment type="function">
    <text evidence="1">Part of the Sec protein translocase complex. Interacts with the SecYEG preprotein conducting channel. Has a central role in coupling the hydrolysis of ATP to the transfer of proteins into and across the cell membrane, serving both as a receptor for the preprotein-SecB complex and as an ATP-driven molecular motor driving the stepwise translocation of polypeptide chains across the membrane.</text>
</comment>
<comment type="catalytic activity">
    <reaction evidence="1">
        <text>ATP + H2O + cellular proteinSide 1 = ADP + phosphate + cellular proteinSide 2.</text>
        <dbReference type="EC" id="7.4.2.8"/>
    </reaction>
</comment>
<comment type="subunit">
    <text evidence="1">Monomer and homodimer. Part of the essential Sec protein translocation apparatus which comprises SecA, SecYEG and auxiliary proteins SecDF-YajC and YidC.</text>
</comment>
<comment type="subcellular location">
    <subcellularLocation>
        <location evidence="1">Cell inner membrane</location>
        <topology evidence="1">Peripheral membrane protein</topology>
        <orientation evidence="1">Cytoplasmic side</orientation>
    </subcellularLocation>
    <subcellularLocation>
        <location evidence="1">Cytoplasm</location>
    </subcellularLocation>
    <text evidence="1">Distribution is 50-50.</text>
</comment>
<comment type="similarity">
    <text evidence="1">Belongs to the SecA family.</text>
</comment>
<feature type="chain" id="PRO_0000318374" description="Protein translocase subunit SecA 2">
    <location>
        <begin position="1"/>
        <end position="649"/>
    </location>
</feature>
<feature type="binding site" evidence="1">
    <location>
        <position position="105"/>
    </location>
    <ligand>
        <name>ATP</name>
        <dbReference type="ChEBI" id="CHEBI:30616"/>
    </ligand>
</feature>
<feature type="binding site" evidence="1">
    <location>
        <begin position="123"/>
        <end position="127"/>
    </location>
    <ligand>
        <name>ATP</name>
        <dbReference type="ChEBI" id="CHEBI:30616"/>
    </ligand>
</feature>
<feature type="binding site" evidence="1">
    <location>
        <position position="535"/>
    </location>
    <ligand>
        <name>ATP</name>
        <dbReference type="ChEBI" id="CHEBI:30616"/>
    </ligand>
</feature>
<organism>
    <name type="scientific">Magnetococcus marinus (strain ATCC BAA-1437 / JCM 17883 / MC-1)</name>
    <dbReference type="NCBI Taxonomy" id="156889"/>
    <lineage>
        <taxon>Bacteria</taxon>
        <taxon>Pseudomonadati</taxon>
        <taxon>Pseudomonadota</taxon>
        <taxon>Alphaproteobacteria</taxon>
        <taxon>Magnetococcales</taxon>
        <taxon>Magnetococcaceae</taxon>
        <taxon>Magnetococcus</taxon>
    </lineage>
</organism>
<sequence length="649" mass="71375">MSGVSELLLPSPVPQGVEGVLHGLHGRWRGRAAHRRRLMQLAEQAERRCMALLGLPETQLQQQLLEIQSRFRRRLLTDDETLLAGVALVGELAWRAVQKRPYRVQFMGALAMHRGWLAEMATGEGKTLTVAVAAVLAGWSGRACHVISANDYLTERDAQQMTPLYEACGVTVASGGGALSPEERQLCYKADVVYVTAKTLLADYLRDQLATRQGAGRAQQGFAQWLTGGAQQPSAMMLGRGLHTVIIDEADSVLIDEAVTPLILAAPQKIPGMHGAVMWAAEVAERLHEEEDYTADRRTRQIQLLEGANQLMAAMAWRLDAVWRSEVRRQELVRHALSVRHFIRVGQHYLVQEDKVVLLDDATGRMTPERSLTAGLHQAIEAYEGVPLTDPNASMGQMSFQTFFRRFHRFCGTTGTARESTRELWRIYRLAVLPIPTHRPRQTVVHPTRVYATLEDKWQAVAAEVAQVHASGRPVLVGVRSVSSSEQLAAVLVEKGLSAQVLNARNHAEEAAIVSRAGQSGHVTIATNMAGRGTDIGLEEQTRSLGGLHVIIAECNSSARIDRQLAGRCGRQGDPGSVVTLLCLEEDVLRQQLSPALLGIARSLPRWGWAAGVLAGLVHYAQRRSEAQAYGQRRAVMQGDEWLNNALPF</sequence>
<gene>
    <name evidence="1" type="primary">secA2</name>
    <name type="ordered locus">Mmc1_2197</name>
</gene>
<dbReference type="EC" id="7.4.2.8" evidence="1"/>
<dbReference type="EMBL" id="CP000471">
    <property type="protein sequence ID" value="ABK44698.1"/>
    <property type="molecule type" value="Genomic_DNA"/>
</dbReference>
<dbReference type="RefSeq" id="WP_011713820.1">
    <property type="nucleotide sequence ID" value="NC_008576.1"/>
</dbReference>
<dbReference type="SMR" id="A0L9Q5"/>
<dbReference type="STRING" id="156889.Mmc1_2197"/>
<dbReference type="KEGG" id="mgm:Mmc1_2197"/>
<dbReference type="eggNOG" id="COG0653">
    <property type="taxonomic scope" value="Bacteria"/>
</dbReference>
<dbReference type="HOGENOM" id="CLU_005314_3_2_5"/>
<dbReference type="OrthoDB" id="9805579at2"/>
<dbReference type="Proteomes" id="UP000002586">
    <property type="component" value="Chromosome"/>
</dbReference>
<dbReference type="GO" id="GO:0031522">
    <property type="term" value="C:cell envelope Sec protein transport complex"/>
    <property type="evidence" value="ECO:0007669"/>
    <property type="project" value="TreeGrafter"/>
</dbReference>
<dbReference type="GO" id="GO:0005829">
    <property type="term" value="C:cytosol"/>
    <property type="evidence" value="ECO:0007669"/>
    <property type="project" value="TreeGrafter"/>
</dbReference>
<dbReference type="GO" id="GO:0005886">
    <property type="term" value="C:plasma membrane"/>
    <property type="evidence" value="ECO:0007669"/>
    <property type="project" value="UniProtKB-SubCell"/>
</dbReference>
<dbReference type="GO" id="GO:0005524">
    <property type="term" value="F:ATP binding"/>
    <property type="evidence" value="ECO:0007669"/>
    <property type="project" value="UniProtKB-UniRule"/>
</dbReference>
<dbReference type="GO" id="GO:0008564">
    <property type="term" value="F:protein-exporting ATPase activity"/>
    <property type="evidence" value="ECO:0007669"/>
    <property type="project" value="UniProtKB-EC"/>
</dbReference>
<dbReference type="GO" id="GO:0065002">
    <property type="term" value="P:intracellular protein transmembrane transport"/>
    <property type="evidence" value="ECO:0007669"/>
    <property type="project" value="UniProtKB-UniRule"/>
</dbReference>
<dbReference type="GO" id="GO:0017038">
    <property type="term" value="P:protein import"/>
    <property type="evidence" value="ECO:0007669"/>
    <property type="project" value="InterPro"/>
</dbReference>
<dbReference type="GO" id="GO:0006605">
    <property type="term" value="P:protein targeting"/>
    <property type="evidence" value="ECO:0007669"/>
    <property type="project" value="UniProtKB-UniRule"/>
</dbReference>
<dbReference type="GO" id="GO:0043952">
    <property type="term" value="P:protein transport by the Sec complex"/>
    <property type="evidence" value="ECO:0007669"/>
    <property type="project" value="TreeGrafter"/>
</dbReference>
<dbReference type="CDD" id="cd17928">
    <property type="entry name" value="DEXDc_SecA"/>
    <property type="match status" value="1"/>
</dbReference>
<dbReference type="CDD" id="cd18803">
    <property type="entry name" value="SF2_C_secA"/>
    <property type="match status" value="1"/>
</dbReference>
<dbReference type="FunFam" id="3.40.50.300:FF:000429">
    <property type="entry name" value="Preprotein translocase subunit SecA"/>
    <property type="match status" value="1"/>
</dbReference>
<dbReference type="Gene3D" id="3.40.50.300">
    <property type="entry name" value="P-loop containing nucleotide triphosphate hydrolases"/>
    <property type="match status" value="2"/>
</dbReference>
<dbReference type="Gene3D" id="3.90.1440.10">
    <property type="entry name" value="SecA, preprotein cross-linking domain"/>
    <property type="match status" value="1"/>
</dbReference>
<dbReference type="HAMAP" id="MF_01382">
    <property type="entry name" value="SecA"/>
    <property type="match status" value="1"/>
</dbReference>
<dbReference type="InterPro" id="IPR014001">
    <property type="entry name" value="Helicase_ATP-bd"/>
</dbReference>
<dbReference type="InterPro" id="IPR001650">
    <property type="entry name" value="Helicase_C-like"/>
</dbReference>
<dbReference type="InterPro" id="IPR027417">
    <property type="entry name" value="P-loop_NTPase"/>
</dbReference>
<dbReference type="InterPro" id="IPR000185">
    <property type="entry name" value="SecA"/>
</dbReference>
<dbReference type="InterPro" id="IPR020937">
    <property type="entry name" value="SecA_CS"/>
</dbReference>
<dbReference type="InterPro" id="IPR011115">
    <property type="entry name" value="SecA_DEAD"/>
</dbReference>
<dbReference type="InterPro" id="IPR014018">
    <property type="entry name" value="SecA_motor_DEAD"/>
</dbReference>
<dbReference type="InterPro" id="IPR011130">
    <property type="entry name" value="SecA_preprotein_X-link_dom"/>
</dbReference>
<dbReference type="InterPro" id="IPR044722">
    <property type="entry name" value="SecA_SF2_C"/>
</dbReference>
<dbReference type="InterPro" id="IPR036670">
    <property type="entry name" value="SecA_X-link_sf"/>
</dbReference>
<dbReference type="PANTHER" id="PTHR30612:SF0">
    <property type="entry name" value="CHLOROPLAST PROTEIN-TRANSPORTING ATPASE"/>
    <property type="match status" value="1"/>
</dbReference>
<dbReference type="PANTHER" id="PTHR30612">
    <property type="entry name" value="SECA INNER MEMBRANE COMPONENT OF SEC PROTEIN SECRETION SYSTEM"/>
    <property type="match status" value="1"/>
</dbReference>
<dbReference type="Pfam" id="PF21090">
    <property type="entry name" value="P-loop_SecA"/>
    <property type="match status" value="1"/>
</dbReference>
<dbReference type="Pfam" id="PF07517">
    <property type="entry name" value="SecA_DEAD"/>
    <property type="match status" value="1"/>
</dbReference>
<dbReference type="Pfam" id="PF01043">
    <property type="entry name" value="SecA_PP_bind"/>
    <property type="match status" value="1"/>
</dbReference>
<dbReference type="PRINTS" id="PR00906">
    <property type="entry name" value="SECA"/>
</dbReference>
<dbReference type="SMART" id="SM00957">
    <property type="entry name" value="SecA_DEAD"/>
    <property type="match status" value="1"/>
</dbReference>
<dbReference type="SMART" id="SM00958">
    <property type="entry name" value="SecA_PP_bind"/>
    <property type="match status" value="1"/>
</dbReference>
<dbReference type="SUPFAM" id="SSF52540">
    <property type="entry name" value="P-loop containing nucleoside triphosphate hydrolases"/>
    <property type="match status" value="2"/>
</dbReference>
<dbReference type="SUPFAM" id="SSF81767">
    <property type="entry name" value="Pre-protein crosslinking domain of SecA"/>
    <property type="match status" value="1"/>
</dbReference>
<dbReference type="PROSITE" id="PS01312">
    <property type="entry name" value="SECA"/>
    <property type="match status" value="1"/>
</dbReference>
<dbReference type="PROSITE" id="PS51196">
    <property type="entry name" value="SECA_MOTOR_DEAD"/>
    <property type="match status" value="1"/>
</dbReference>
<reference key="1">
    <citation type="journal article" date="2009" name="Appl. Environ. Microbiol.">
        <title>Complete genome sequence of the chemolithoautotrophic marine magnetotactic coccus strain MC-1.</title>
        <authorList>
            <person name="Schubbe S."/>
            <person name="Williams T.J."/>
            <person name="Xie G."/>
            <person name="Kiss H.E."/>
            <person name="Brettin T.S."/>
            <person name="Martinez D."/>
            <person name="Ross C.A."/>
            <person name="Schuler D."/>
            <person name="Cox B.L."/>
            <person name="Nealson K.H."/>
            <person name="Bazylinski D.A."/>
        </authorList>
    </citation>
    <scope>NUCLEOTIDE SEQUENCE [LARGE SCALE GENOMIC DNA]</scope>
    <source>
        <strain>ATCC BAA-1437 / JCM 17883 / MC-1</strain>
    </source>
</reference>
<protein>
    <recommendedName>
        <fullName evidence="1">Protein translocase subunit SecA 2</fullName>
        <ecNumber evidence="1">7.4.2.8</ecNumber>
    </recommendedName>
</protein>
<proteinExistence type="inferred from homology"/>
<evidence type="ECO:0000255" key="1">
    <source>
        <dbReference type="HAMAP-Rule" id="MF_01382"/>
    </source>
</evidence>
<name>SECA2_MAGMM</name>
<accession>A0L9Q5</accession>